<name>TRPB_CLONN</name>
<sequence>MKKQFGKFGGQYVSKELTSTLKNLEENFFKYCNDDDFKKEYIYYLNNYIGRPSLLYYAKRLTKSLGGAKIYLKREDLNHTGAHKINNAIGQILLAKRMGKKKVIAETGAGQHGVATATAAALFGMECTIFMGEEDIKRQKLNTFKMELLGAKIKPVKSGNGTLKDAVDEAIKQWVKSSDDTFYVLGSAVGPHPYPTMVREFQKIIGEETKDQILRMEGRLPDTLIACVGGGSNAIGLFYPFIKDENIEIIGVEAGGKGVETGEHGAAFADGRVGVIHGMKTVIMEDDNGNVKEAYSISAGLDYPGVGPEHAYLNDIGRAKYVSITDEEAVEAFKYLCANEGIIPALESSHAIAYTMKLAPNMDKDKIIVVNLSGRGDKDVETISEYLNK</sequence>
<comment type="function">
    <text evidence="1">The beta subunit is responsible for the synthesis of L-tryptophan from indole and L-serine.</text>
</comment>
<comment type="catalytic activity">
    <reaction evidence="1">
        <text>(1S,2R)-1-C-(indol-3-yl)glycerol 3-phosphate + L-serine = D-glyceraldehyde 3-phosphate + L-tryptophan + H2O</text>
        <dbReference type="Rhea" id="RHEA:10532"/>
        <dbReference type="ChEBI" id="CHEBI:15377"/>
        <dbReference type="ChEBI" id="CHEBI:33384"/>
        <dbReference type="ChEBI" id="CHEBI:57912"/>
        <dbReference type="ChEBI" id="CHEBI:58866"/>
        <dbReference type="ChEBI" id="CHEBI:59776"/>
        <dbReference type="EC" id="4.2.1.20"/>
    </reaction>
</comment>
<comment type="cofactor">
    <cofactor evidence="1">
        <name>pyridoxal 5'-phosphate</name>
        <dbReference type="ChEBI" id="CHEBI:597326"/>
    </cofactor>
</comment>
<comment type="pathway">
    <text evidence="1">Amino-acid biosynthesis; L-tryptophan biosynthesis; L-tryptophan from chorismate: step 5/5.</text>
</comment>
<comment type="subunit">
    <text evidence="1">Tetramer of two alpha and two beta chains.</text>
</comment>
<comment type="similarity">
    <text evidence="1">Belongs to the TrpB family.</text>
</comment>
<gene>
    <name evidence="1" type="primary">trpB</name>
    <name type="ordered locus">NT01CX_1342</name>
</gene>
<proteinExistence type="inferred from homology"/>
<protein>
    <recommendedName>
        <fullName evidence="1">Tryptophan synthase beta chain</fullName>
        <ecNumber evidence="1">4.2.1.20</ecNumber>
    </recommendedName>
</protein>
<reference key="1">
    <citation type="journal article" date="2006" name="Nat. Biotechnol.">
        <title>The genome and transcriptomes of the anti-tumor agent Clostridium novyi-NT.</title>
        <authorList>
            <person name="Bettegowda C."/>
            <person name="Huang X."/>
            <person name="Lin J."/>
            <person name="Cheong I."/>
            <person name="Kohli M."/>
            <person name="Szabo S.A."/>
            <person name="Zhang X."/>
            <person name="Diaz L.A. Jr."/>
            <person name="Velculescu V.E."/>
            <person name="Parmigiani G."/>
            <person name="Kinzler K.W."/>
            <person name="Vogelstein B."/>
            <person name="Zhou S."/>
        </authorList>
    </citation>
    <scope>NUCLEOTIDE SEQUENCE [LARGE SCALE GENOMIC DNA]</scope>
    <source>
        <strain>NT</strain>
    </source>
</reference>
<organism>
    <name type="scientific">Clostridium novyi (strain NT)</name>
    <dbReference type="NCBI Taxonomy" id="386415"/>
    <lineage>
        <taxon>Bacteria</taxon>
        <taxon>Bacillati</taxon>
        <taxon>Bacillota</taxon>
        <taxon>Clostridia</taxon>
        <taxon>Eubacteriales</taxon>
        <taxon>Clostridiaceae</taxon>
        <taxon>Clostridium</taxon>
    </lineage>
</organism>
<keyword id="KW-0028">Amino-acid biosynthesis</keyword>
<keyword id="KW-0057">Aromatic amino acid biosynthesis</keyword>
<keyword id="KW-0456">Lyase</keyword>
<keyword id="KW-0663">Pyridoxal phosphate</keyword>
<keyword id="KW-1185">Reference proteome</keyword>
<keyword id="KW-0822">Tryptophan biosynthesis</keyword>
<dbReference type="EC" id="4.2.1.20" evidence="1"/>
<dbReference type="EMBL" id="CP000382">
    <property type="protein sequence ID" value="ABK60984.1"/>
    <property type="molecule type" value="Genomic_DNA"/>
</dbReference>
<dbReference type="RefSeq" id="WP_011721433.1">
    <property type="nucleotide sequence ID" value="NC_008593.1"/>
</dbReference>
<dbReference type="SMR" id="A0PYH3"/>
<dbReference type="STRING" id="386415.NT01CX_1342"/>
<dbReference type="KEGG" id="cno:NT01CX_1342"/>
<dbReference type="PATRIC" id="fig|386415.7.peg.450"/>
<dbReference type="eggNOG" id="COG0133">
    <property type="taxonomic scope" value="Bacteria"/>
</dbReference>
<dbReference type="HOGENOM" id="CLU_016734_3_1_9"/>
<dbReference type="UniPathway" id="UPA00035">
    <property type="reaction ID" value="UER00044"/>
</dbReference>
<dbReference type="Proteomes" id="UP000008220">
    <property type="component" value="Chromosome"/>
</dbReference>
<dbReference type="GO" id="GO:0005737">
    <property type="term" value="C:cytoplasm"/>
    <property type="evidence" value="ECO:0007669"/>
    <property type="project" value="TreeGrafter"/>
</dbReference>
<dbReference type="GO" id="GO:0004834">
    <property type="term" value="F:tryptophan synthase activity"/>
    <property type="evidence" value="ECO:0007669"/>
    <property type="project" value="UniProtKB-UniRule"/>
</dbReference>
<dbReference type="CDD" id="cd06446">
    <property type="entry name" value="Trp-synth_B"/>
    <property type="match status" value="1"/>
</dbReference>
<dbReference type="FunFam" id="3.40.50.1100:FF:000001">
    <property type="entry name" value="Tryptophan synthase beta chain"/>
    <property type="match status" value="1"/>
</dbReference>
<dbReference type="FunFam" id="3.40.50.1100:FF:000004">
    <property type="entry name" value="Tryptophan synthase beta chain"/>
    <property type="match status" value="1"/>
</dbReference>
<dbReference type="Gene3D" id="3.40.50.1100">
    <property type="match status" value="2"/>
</dbReference>
<dbReference type="HAMAP" id="MF_00133">
    <property type="entry name" value="Trp_synth_beta"/>
    <property type="match status" value="1"/>
</dbReference>
<dbReference type="InterPro" id="IPR006653">
    <property type="entry name" value="Trp_synth_b_CS"/>
</dbReference>
<dbReference type="InterPro" id="IPR006654">
    <property type="entry name" value="Trp_synth_beta"/>
</dbReference>
<dbReference type="InterPro" id="IPR023026">
    <property type="entry name" value="Trp_synth_beta/beta-like"/>
</dbReference>
<dbReference type="InterPro" id="IPR001926">
    <property type="entry name" value="TrpB-like_PALP"/>
</dbReference>
<dbReference type="InterPro" id="IPR036052">
    <property type="entry name" value="TrpB-like_PALP_sf"/>
</dbReference>
<dbReference type="NCBIfam" id="TIGR00263">
    <property type="entry name" value="trpB"/>
    <property type="match status" value="1"/>
</dbReference>
<dbReference type="PANTHER" id="PTHR48077:SF3">
    <property type="entry name" value="TRYPTOPHAN SYNTHASE"/>
    <property type="match status" value="1"/>
</dbReference>
<dbReference type="PANTHER" id="PTHR48077">
    <property type="entry name" value="TRYPTOPHAN SYNTHASE-RELATED"/>
    <property type="match status" value="1"/>
</dbReference>
<dbReference type="Pfam" id="PF00291">
    <property type="entry name" value="PALP"/>
    <property type="match status" value="1"/>
</dbReference>
<dbReference type="PIRSF" id="PIRSF001413">
    <property type="entry name" value="Trp_syn_beta"/>
    <property type="match status" value="1"/>
</dbReference>
<dbReference type="SUPFAM" id="SSF53686">
    <property type="entry name" value="Tryptophan synthase beta subunit-like PLP-dependent enzymes"/>
    <property type="match status" value="1"/>
</dbReference>
<dbReference type="PROSITE" id="PS00168">
    <property type="entry name" value="TRP_SYNTHASE_BETA"/>
    <property type="match status" value="1"/>
</dbReference>
<evidence type="ECO:0000255" key="1">
    <source>
        <dbReference type="HAMAP-Rule" id="MF_00133"/>
    </source>
</evidence>
<feature type="chain" id="PRO_1000076384" description="Tryptophan synthase beta chain">
    <location>
        <begin position="1"/>
        <end position="389"/>
    </location>
</feature>
<feature type="modified residue" description="N6-(pyridoxal phosphate)lysine" evidence="1">
    <location>
        <position position="84"/>
    </location>
</feature>
<accession>A0PYH3</accession>